<name>MURG_RICAE</name>
<dbReference type="EC" id="2.4.1.227" evidence="1"/>
<dbReference type="EMBL" id="CP001612">
    <property type="protein sequence ID" value="ACP53445.1"/>
    <property type="molecule type" value="Genomic_DNA"/>
</dbReference>
<dbReference type="RefSeq" id="WP_012719667.1">
    <property type="nucleotide sequence ID" value="NC_012633.1"/>
</dbReference>
<dbReference type="SMR" id="C3PND5"/>
<dbReference type="CAZy" id="GT28">
    <property type="family name" value="Glycosyltransferase Family 28"/>
</dbReference>
<dbReference type="KEGG" id="raf:RAF_ORF0524"/>
<dbReference type="HOGENOM" id="CLU_037404_2_1_5"/>
<dbReference type="UniPathway" id="UPA00219"/>
<dbReference type="Proteomes" id="UP000002305">
    <property type="component" value="Chromosome"/>
</dbReference>
<dbReference type="GO" id="GO:0005886">
    <property type="term" value="C:plasma membrane"/>
    <property type="evidence" value="ECO:0007669"/>
    <property type="project" value="UniProtKB-SubCell"/>
</dbReference>
<dbReference type="GO" id="GO:0051991">
    <property type="term" value="F:UDP-N-acetyl-D-glucosamine:N-acetylmuramoyl-L-alanyl-D-glutamyl-meso-2,6-diaminopimelyl-D-alanyl-D-alanine-diphosphoundecaprenol 4-beta-N-acetylglucosaminlytransferase activity"/>
    <property type="evidence" value="ECO:0007669"/>
    <property type="project" value="RHEA"/>
</dbReference>
<dbReference type="GO" id="GO:0050511">
    <property type="term" value="F:undecaprenyldiphospho-muramoylpentapeptide beta-N-acetylglucosaminyltransferase activity"/>
    <property type="evidence" value="ECO:0007669"/>
    <property type="project" value="UniProtKB-UniRule"/>
</dbReference>
<dbReference type="GO" id="GO:0005975">
    <property type="term" value="P:carbohydrate metabolic process"/>
    <property type="evidence" value="ECO:0007669"/>
    <property type="project" value="InterPro"/>
</dbReference>
<dbReference type="GO" id="GO:0051301">
    <property type="term" value="P:cell division"/>
    <property type="evidence" value="ECO:0007669"/>
    <property type="project" value="UniProtKB-KW"/>
</dbReference>
<dbReference type="GO" id="GO:0071555">
    <property type="term" value="P:cell wall organization"/>
    <property type="evidence" value="ECO:0007669"/>
    <property type="project" value="UniProtKB-KW"/>
</dbReference>
<dbReference type="GO" id="GO:0030259">
    <property type="term" value="P:lipid glycosylation"/>
    <property type="evidence" value="ECO:0007669"/>
    <property type="project" value="UniProtKB-UniRule"/>
</dbReference>
<dbReference type="GO" id="GO:0009252">
    <property type="term" value="P:peptidoglycan biosynthetic process"/>
    <property type="evidence" value="ECO:0007669"/>
    <property type="project" value="UniProtKB-UniRule"/>
</dbReference>
<dbReference type="GO" id="GO:0008360">
    <property type="term" value="P:regulation of cell shape"/>
    <property type="evidence" value="ECO:0007669"/>
    <property type="project" value="UniProtKB-KW"/>
</dbReference>
<dbReference type="CDD" id="cd03785">
    <property type="entry name" value="GT28_MurG"/>
    <property type="match status" value="1"/>
</dbReference>
<dbReference type="Gene3D" id="3.40.50.2000">
    <property type="entry name" value="Glycogen Phosphorylase B"/>
    <property type="match status" value="2"/>
</dbReference>
<dbReference type="HAMAP" id="MF_00033">
    <property type="entry name" value="MurG"/>
    <property type="match status" value="1"/>
</dbReference>
<dbReference type="InterPro" id="IPR006009">
    <property type="entry name" value="GlcNAc_MurG"/>
</dbReference>
<dbReference type="InterPro" id="IPR007235">
    <property type="entry name" value="Glyco_trans_28_C"/>
</dbReference>
<dbReference type="InterPro" id="IPR004276">
    <property type="entry name" value="GlycoTrans_28_N"/>
</dbReference>
<dbReference type="InterPro" id="IPR022439">
    <property type="entry name" value="RPE4"/>
</dbReference>
<dbReference type="NCBIfam" id="TIGR01133">
    <property type="entry name" value="murG"/>
    <property type="match status" value="1"/>
</dbReference>
<dbReference type="NCBIfam" id="TIGR03777">
    <property type="entry name" value="RPE4"/>
    <property type="match status" value="1"/>
</dbReference>
<dbReference type="PANTHER" id="PTHR21015:SF22">
    <property type="entry name" value="GLYCOSYLTRANSFERASE"/>
    <property type="match status" value="1"/>
</dbReference>
<dbReference type="PANTHER" id="PTHR21015">
    <property type="entry name" value="UDP-N-ACETYLGLUCOSAMINE--N-ACETYLMURAMYL-(PENTAPEPTIDE) PYROPHOSPHORYL-UNDECAPRENOL N-ACETYLGLUCOSAMINE TRANSFERASE 1"/>
    <property type="match status" value="1"/>
</dbReference>
<dbReference type="Pfam" id="PF04101">
    <property type="entry name" value="Glyco_tran_28_C"/>
    <property type="match status" value="1"/>
</dbReference>
<dbReference type="Pfam" id="PF03033">
    <property type="entry name" value="Glyco_transf_28"/>
    <property type="match status" value="1"/>
</dbReference>
<dbReference type="SUPFAM" id="SSF53756">
    <property type="entry name" value="UDP-Glycosyltransferase/glycogen phosphorylase"/>
    <property type="match status" value="1"/>
</dbReference>
<reference key="1">
    <citation type="journal article" date="2009" name="BMC Genomics">
        <title>Analysis of the Rickettsia africae genome reveals that virulence acquisition in Rickettsia species may be explained by genome reduction.</title>
        <authorList>
            <person name="Fournier P.-E."/>
            <person name="El Karkouri K."/>
            <person name="Leroy Q."/>
            <person name="Robert C."/>
            <person name="Giumelli B."/>
            <person name="Renesto P."/>
            <person name="Socolovschi C."/>
            <person name="Parola P."/>
            <person name="Audic S."/>
            <person name="Raoult D."/>
        </authorList>
    </citation>
    <scope>NUCLEOTIDE SEQUENCE [LARGE SCALE GENOMIC DNA]</scope>
    <source>
        <strain>ESF-5</strain>
    </source>
</reference>
<feature type="chain" id="PRO_1000202028" description="UDP-N-acetylglucosamine--N-acetylmuramyl-(pentapeptide) pyrophosphoryl-undecaprenol N-acetylglucosamine transferase">
    <location>
        <begin position="1"/>
        <end position="376"/>
    </location>
</feature>
<feature type="binding site" evidence="1">
    <location>
        <begin position="11"/>
        <end position="13"/>
    </location>
    <ligand>
        <name>UDP-N-acetyl-alpha-D-glucosamine</name>
        <dbReference type="ChEBI" id="CHEBI:57705"/>
    </ligand>
</feature>
<feature type="binding site" evidence="1">
    <location>
        <position position="117"/>
    </location>
    <ligand>
        <name>UDP-N-acetyl-alpha-D-glucosamine</name>
        <dbReference type="ChEBI" id="CHEBI:57705"/>
    </ligand>
</feature>
<feature type="binding site" evidence="1">
    <location>
        <position position="160"/>
    </location>
    <ligand>
        <name>UDP-N-acetyl-alpha-D-glucosamine</name>
        <dbReference type="ChEBI" id="CHEBI:57705"/>
    </ligand>
</feature>
<feature type="binding site" evidence="1">
    <location>
        <position position="208"/>
    </location>
    <ligand>
        <name>UDP-N-acetyl-alpha-D-glucosamine</name>
        <dbReference type="ChEBI" id="CHEBI:57705"/>
    </ligand>
</feature>
<feature type="binding site" evidence="1">
    <location>
        <position position="310"/>
    </location>
    <ligand>
        <name>UDP-N-acetyl-alpha-D-glucosamine</name>
        <dbReference type="ChEBI" id="CHEBI:57705"/>
    </ligand>
</feature>
<gene>
    <name evidence="1" type="primary">murG</name>
    <name type="ordered locus">RAF_ORF0524</name>
</gene>
<comment type="function">
    <text evidence="1">Cell wall formation. Catalyzes the transfer of a GlcNAc subunit on undecaprenyl-pyrophosphoryl-MurNAc-pentapeptide (lipid intermediate I) to form undecaprenyl-pyrophosphoryl-MurNAc-(pentapeptide)GlcNAc (lipid intermediate II).</text>
</comment>
<comment type="catalytic activity">
    <reaction evidence="1">
        <text>di-trans,octa-cis-undecaprenyl diphospho-N-acetyl-alpha-D-muramoyl-L-alanyl-D-glutamyl-meso-2,6-diaminopimeloyl-D-alanyl-D-alanine + UDP-N-acetyl-alpha-D-glucosamine = di-trans,octa-cis-undecaprenyl diphospho-[N-acetyl-alpha-D-glucosaminyl-(1-&gt;4)]-N-acetyl-alpha-D-muramoyl-L-alanyl-D-glutamyl-meso-2,6-diaminopimeloyl-D-alanyl-D-alanine + UDP + H(+)</text>
        <dbReference type="Rhea" id="RHEA:31227"/>
        <dbReference type="ChEBI" id="CHEBI:15378"/>
        <dbReference type="ChEBI" id="CHEBI:57705"/>
        <dbReference type="ChEBI" id="CHEBI:58223"/>
        <dbReference type="ChEBI" id="CHEBI:61387"/>
        <dbReference type="ChEBI" id="CHEBI:61388"/>
        <dbReference type="EC" id="2.4.1.227"/>
    </reaction>
</comment>
<comment type="pathway">
    <text evidence="1">Cell wall biogenesis; peptidoglycan biosynthesis.</text>
</comment>
<comment type="subcellular location">
    <subcellularLocation>
        <location evidence="1">Cell inner membrane</location>
        <topology evidence="1">Peripheral membrane protein</topology>
        <orientation evidence="1">Cytoplasmic side</orientation>
    </subcellularLocation>
</comment>
<comment type="similarity">
    <text evidence="1">Belongs to the glycosyltransferase 28 family. MurG subfamily.</text>
</comment>
<organism>
    <name type="scientific">Rickettsia africae (strain ESF-5)</name>
    <dbReference type="NCBI Taxonomy" id="347255"/>
    <lineage>
        <taxon>Bacteria</taxon>
        <taxon>Pseudomonadati</taxon>
        <taxon>Pseudomonadota</taxon>
        <taxon>Alphaproteobacteria</taxon>
        <taxon>Rickettsiales</taxon>
        <taxon>Rickettsiaceae</taxon>
        <taxon>Rickettsieae</taxon>
        <taxon>Rickettsia</taxon>
        <taxon>spotted fever group</taxon>
    </lineage>
</organism>
<protein>
    <recommendedName>
        <fullName evidence="1">UDP-N-acetylglucosamine--N-acetylmuramyl-(pentapeptide) pyrophosphoryl-undecaprenol N-acetylglucosamine transferase</fullName>
        <ecNumber evidence="1">2.4.1.227</ecNumber>
    </recommendedName>
    <alternativeName>
        <fullName evidence="1">Undecaprenyl-PP-MurNAc-pentapeptide-UDPGlcNAc GlcNAc transferase</fullName>
    </alternativeName>
</protein>
<evidence type="ECO:0000255" key="1">
    <source>
        <dbReference type="HAMAP-Rule" id="MF_00033"/>
    </source>
</evidence>
<keyword id="KW-0131">Cell cycle</keyword>
<keyword id="KW-0132">Cell division</keyword>
<keyword id="KW-0997">Cell inner membrane</keyword>
<keyword id="KW-1003">Cell membrane</keyword>
<keyword id="KW-0133">Cell shape</keyword>
<keyword id="KW-0961">Cell wall biogenesis/degradation</keyword>
<keyword id="KW-0328">Glycosyltransferase</keyword>
<keyword id="KW-0472">Membrane</keyword>
<keyword id="KW-0573">Peptidoglycan synthesis</keyword>
<keyword id="KW-0808">Transferase</keyword>
<proteinExistence type="inferred from homology"/>
<accession>C3PND5</accession>
<sequence>MKKIILVAGGTGGHFFPAVALGEELIKRGYEVHFITDLRCKQYIKQDMKVIFHILDLKRSGNIFLFLPRLSIAVLKAIKLLYNMKPSVTVGFGGYPVIAPMFAAIFLRVPIIIHEQNSYLGKVNKFFASFAKKIAISYEKIKNLPEFAKSKIVVTGGVVRENIRELKVIEMSSRGLTTGSKKSLIKALDSVVKPRNDKLFTIFIFGGSQGAKLFSELIPASIQFLMQKQPSLELNIIQQAALDDQVKIKDIYSKLNITYEFAEFFDNMALQYKEADLVISRAGASTIEELTYIGLPAIFIPLPSAADNHQYYNAQLLEDEKTGWCLEQNNISAGKLADKILELISNPKILEDASQNLLKRRKEGHKLLSNLIEEVI</sequence>